<protein>
    <recommendedName>
        <fullName evidence="2">Protein clueless</fullName>
    </recommendedName>
    <alternativeName>
        <fullName evidence="2">Clustered mitochondria protein homolog</fullName>
    </alternativeName>
</protein>
<sequence>MALEIDAKNAAAAATGDGGAPGKAKAKENKSNSNSNNNNVPAAGEKNLVNGSSAATKKKGKKNRNKSPPQQDVSAAGAALSNGHAEKASVNGDAADANANVLDKKVEEEGATAAAGATEAAAEVGSSGDGGAATEGEAAASGEDVDLDALHDVGITVNISSPGADVLSVQLSSMELVQEIHQLLMDREETCHRTCFSLQLDNVTLDNFAELKTIEGLEQGSTIRVVEEPYTMREARIHVRHVRDLLKNLDPADAYNGIDCTSLTYLITITQGDLLDKKRTRPDSVDCTPPDYVIPGVREPPLLPLHPNIKNAKGPQALKVLTTSAWNPPPGPRKLHGDLMYLYVVTMEDKRFHISACSKGFYINQSTDECFNPKPDNPSHLSHSLIDLLSHISPSFRRAFQTIQKRRTMRHAFERVATPYQVYQWSAPQLEHTVDAIRAEDAFSSKLGYEEHIPGQTRDWNEELQTTRELPRKTLPERLLRERAIFKVHGDFVTAATRGAMAVIDGNVLAINPGEDPKMQMFIWNNIFFSLGFDVRDHYKELGGDHAAFVAPRYDLHGVRVYNAVDIEGLYTLGTVVIDYRGYRVTAQSIIPGILEREQEQSVVYGSIDFGKTVLSHPKYLELLRLAGKHLKILPHSVLNERDEPVELCSSVECKGIIGNDGRHYILDLLRTFPPDVNFLKLQDVQLSKELTDMGFPIEHRHKLCCLRQELLEAFIEDRYVTFIRIAAVHLQQLNAKKQAEKELPSITEKQEEPEKEQAEKSSAEQPEKEKEKEKDKEDEQKESKPSPTETKSAEAMVNAIREAQSNVAVSNEVQAAEVVKRACAAVGSLKEKEFDFRFNPDVFSPGIRHVDSPESGAQSLAKQKRLVQDAAEFLVLKQIPAFIKEHMAHSSPPIDGQSLTESLHSHGINVRYLGKVIKMLSQMPRMDYLHRIAILELIVRATKHIYYTYMQSTEPLHLSAAISHFLNCLLTTGPVNPAVSSEEVHKKQSRNNGGKHNKHNKSNKSGKPQSTSAAAATQNGHSSTAANGSANSAANTASTSGNSNYDWTLVTPRSLWQQIRKEIKSYWNWELDCDSIESACAKYGLLRISLLRAFCLKVGIQVLLREYNFESKHKPTFGDDDIVNVFPVVKHISPRATDAYNFYTTGQAKIQQGLLKEGYELISEALNLLNNVFGAMHQENGSCLRMLARLSYLLGDAQDALAIQQRAVIMSERVNGIDHPSTILEYTHLSLYSFANGHVGMSLKLLYRARYLLVLVCGEDHPEVALIDSNISLILHALGEYELSLRFIEHALKLNLKYFGNKAMHVAVSYHLMARIQSCMGDFRSALNNEKETYSIYKSQLGEKHDKTRESAECLRLLTHEAVALQRKMNDIYSNGKLTSDLPPIHITPPSMGSVLEMLNTINGILFVHISQKDIVKVRSQIEKHLKTSDESGPNDDNEVTAALKTFVAAINYNDTEQPKEGSEVEGATATQLTNGSEDSTTTVSS</sequence>
<comment type="function">
    <text evidence="2">mRNA-binding protein involved in proper cytoplasmic distribution of mitochondria.</text>
</comment>
<comment type="subcellular location">
    <subcellularLocation>
        <location evidence="2">Cytoplasm</location>
    </subcellularLocation>
</comment>
<comment type="similarity">
    <text evidence="2">Belongs to the CLU family.</text>
</comment>
<keyword id="KW-0963">Cytoplasm</keyword>
<keyword id="KW-0597">Phosphoprotein</keyword>
<keyword id="KW-1185">Reference proteome</keyword>
<keyword id="KW-0677">Repeat</keyword>
<keyword id="KW-0802">TPR repeat</keyword>
<name>CLU_DROMO</name>
<dbReference type="EMBL" id="CH933808">
    <property type="protein sequence ID" value="EDW09570.1"/>
    <property type="molecule type" value="Genomic_DNA"/>
</dbReference>
<dbReference type="SMR" id="B4KT50"/>
<dbReference type="FunCoup" id="B4KT50">
    <property type="interactions" value="1688"/>
</dbReference>
<dbReference type="EnsemblMetazoa" id="FBtr0171299">
    <property type="protein sequence ID" value="FBpp0169791"/>
    <property type="gene ID" value="FBgn0143310"/>
</dbReference>
<dbReference type="EnsemblMetazoa" id="XM_002005599.4">
    <property type="protein sequence ID" value="XP_002005635.1"/>
    <property type="gene ID" value="LOC6579753"/>
</dbReference>
<dbReference type="GeneID" id="6579753"/>
<dbReference type="KEGG" id="dmo:Dmoj_GI20574"/>
<dbReference type="CTD" id="1191"/>
<dbReference type="eggNOG" id="KOG1839">
    <property type="taxonomic scope" value="Eukaryota"/>
</dbReference>
<dbReference type="HOGENOM" id="CLU_003256_1_0_1"/>
<dbReference type="InParanoid" id="B4KT50"/>
<dbReference type="OMA" id="HPVWDKD"/>
<dbReference type="OrthoDB" id="1414216at2759"/>
<dbReference type="PhylomeDB" id="B4KT50"/>
<dbReference type="Proteomes" id="UP000009192">
    <property type="component" value="Unassembled WGS sequence"/>
</dbReference>
<dbReference type="GO" id="GO:0005829">
    <property type="term" value="C:cytosol"/>
    <property type="evidence" value="ECO:0007669"/>
    <property type="project" value="EnsemblMetazoa"/>
</dbReference>
<dbReference type="GO" id="GO:0003729">
    <property type="term" value="F:mRNA binding"/>
    <property type="evidence" value="ECO:0007669"/>
    <property type="project" value="EnsemblMetazoa"/>
</dbReference>
<dbReference type="GO" id="GO:0043022">
    <property type="term" value="F:ribosome binding"/>
    <property type="evidence" value="ECO:0007669"/>
    <property type="project" value="EnsemblMetazoa"/>
</dbReference>
<dbReference type="GO" id="GO:0055059">
    <property type="term" value="P:asymmetric neuroblast division"/>
    <property type="evidence" value="ECO:0007669"/>
    <property type="project" value="EnsemblMetazoa"/>
</dbReference>
<dbReference type="GO" id="GO:0048312">
    <property type="term" value="P:intracellular distribution of mitochondria"/>
    <property type="evidence" value="ECO:0007669"/>
    <property type="project" value="TreeGrafter"/>
</dbReference>
<dbReference type="GO" id="GO:0007005">
    <property type="term" value="P:mitochondrion organization"/>
    <property type="evidence" value="ECO:0007669"/>
    <property type="project" value="UniProtKB-UniRule"/>
</dbReference>
<dbReference type="GO" id="GO:0033750">
    <property type="term" value="P:ribosome localization"/>
    <property type="evidence" value="ECO:0007669"/>
    <property type="project" value="EnsemblMetazoa"/>
</dbReference>
<dbReference type="CDD" id="cd15466">
    <property type="entry name" value="CLU-central"/>
    <property type="match status" value="1"/>
</dbReference>
<dbReference type="FunFam" id="1.25.40.10:FF:000099">
    <property type="entry name" value="Clustered mitochondria protein homolog"/>
    <property type="match status" value="1"/>
</dbReference>
<dbReference type="FunFam" id="3.30.2280.10:FF:000002">
    <property type="entry name" value="Clustered mitochondria protein homolog"/>
    <property type="match status" value="1"/>
</dbReference>
<dbReference type="Gene3D" id="3.30.2280.10">
    <property type="entry name" value="Hypothetical protein (hspc210)"/>
    <property type="match status" value="1"/>
</dbReference>
<dbReference type="Gene3D" id="1.25.40.10">
    <property type="entry name" value="Tetratricopeptide repeat domain"/>
    <property type="match status" value="1"/>
</dbReference>
<dbReference type="HAMAP" id="MF_03013">
    <property type="entry name" value="CLU"/>
    <property type="match status" value="1"/>
</dbReference>
<dbReference type="InterPro" id="IPR033646">
    <property type="entry name" value="CLU-central"/>
</dbReference>
<dbReference type="InterPro" id="IPR025697">
    <property type="entry name" value="CLU_dom"/>
</dbReference>
<dbReference type="InterPro" id="IPR028275">
    <property type="entry name" value="CLU_N"/>
</dbReference>
<dbReference type="InterPro" id="IPR027523">
    <property type="entry name" value="CLU_prot"/>
</dbReference>
<dbReference type="InterPro" id="IPR007967">
    <property type="entry name" value="GSKIP_dom"/>
</dbReference>
<dbReference type="InterPro" id="IPR023231">
    <property type="entry name" value="GSKIP_dom_sf"/>
</dbReference>
<dbReference type="InterPro" id="IPR011990">
    <property type="entry name" value="TPR-like_helical_dom_sf"/>
</dbReference>
<dbReference type="PANTHER" id="PTHR12601:SF6">
    <property type="entry name" value="CLUSTERED MITOCHONDRIA PROTEIN HOMOLOG"/>
    <property type="match status" value="1"/>
</dbReference>
<dbReference type="PANTHER" id="PTHR12601">
    <property type="entry name" value="EUKARYOTIC TRANSLATION INITIATION FACTOR 3 SUBUNIT EIF-3"/>
    <property type="match status" value="1"/>
</dbReference>
<dbReference type="Pfam" id="PF13236">
    <property type="entry name" value="CLU"/>
    <property type="match status" value="1"/>
</dbReference>
<dbReference type="Pfam" id="PF15044">
    <property type="entry name" value="CLU_N"/>
    <property type="match status" value="1"/>
</dbReference>
<dbReference type="Pfam" id="PF12807">
    <property type="entry name" value="eIF3_p135"/>
    <property type="match status" value="1"/>
</dbReference>
<dbReference type="Pfam" id="PF05303">
    <property type="entry name" value="GSKIP_dom"/>
    <property type="match status" value="1"/>
</dbReference>
<dbReference type="Pfam" id="PF13374">
    <property type="entry name" value="TPR_10"/>
    <property type="match status" value="1"/>
</dbReference>
<dbReference type="Pfam" id="PF13424">
    <property type="entry name" value="TPR_12"/>
    <property type="match status" value="1"/>
</dbReference>
<dbReference type="SUPFAM" id="SSF103107">
    <property type="entry name" value="Hypothetical protein c14orf129, hspc210"/>
    <property type="match status" value="1"/>
</dbReference>
<dbReference type="SUPFAM" id="SSF48452">
    <property type="entry name" value="TPR-like"/>
    <property type="match status" value="2"/>
</dbReference>
<dbReference type="PROSITE" id="PS51823">
    <property type="entry name" value="CLU"/>
    <property type="match status" value="1"/>
</dbReference>
<reference key="1">
    <citation type="journal article" date="2007" name="Nature">
        <title>Evolution of genes and genomes on the Drosophila phylogeny.</title>
        <authorList>
            <consortium name="Drosophila 12 genomes consortium"/>
        </authorList>
    </citation>
    <scope>NUCLEOTIDE SEQUENCE [LARGE SCALE GENOMIC DNA]</scope>
    <source>
        <strain>Tucson 15081-1352.22</strain>
    </source>
</reference>
<proteinExistence type="inferred from homology"/>
<accession>B4KT50</accession>
<feature type="chain" id="PRO_0000366383" description="Protein clueless">
    <location>
        <begin position="1"/>
        <end position="1487"/>
    </location>
</feature>
<feature type="domain" description="Clu" evidence="3">
    <location>
        <begin position="438"/>
        <end position="680"/>
    </location>
</feature>
<feature type="repeat" description="TPR 1">
    <location>
        <begin position="1140"/>
        <end position="1173"/>
    </location>
</feature>
<feature type="repeat" description="TPR 2">
    <location>
        <begin position="1266"/>
        <end position="1299"/>
    </location>
</feature>
<feature type="repeat" description="TPR 3">
    <location>
        <begin position="1301"/>
        <end position="1334"/>
    </location>
</feature>
<feature type="region of interest" description="Disordered" evidence="4">
    <location>
        <begin position="1"/>
        <end position="94"/>
    </location>
</feature>
<feature type="region of interest" description="Disordered" evidence="4">
    <location>
        <begin position="110"/>
        <end position="140"/>
    </location>
</feature>
<feature type="region of interest" description="Disordered" evidence="4">
    <location>
        <begin position="739"/>
        <end position="794"/>
    </location>
</feature>
<feature type="region of interest" description="Disordered" evidence="4">
    <location>
        <begin position="980"/>
        <end position="1040"/>
    </location>
</feature>
<feature type="region of interest" description="Disordered" evidence="4">
    <location>
        <begin position="1456"/>
        <end position="1487"/>
    </location>
</feature>
<feature type="compositionally biased region" description="Basic residues" evidence="4">
    <location>
        <begin position="56"/>
        <end position="65"/>
    </location>
</feature>
<feature type="compositionally biased region" description="Low complexity" evidence="4">
    <location>
        <begin position="111"/>
        <end position="126"/>
    </location>
</feature>
<feature type="compositionally biased region" description="Basic and acidic residues" evidence="4">
    <location>
        <begin position="739"/>
        <end position="785"/>
    </location>
</feature>
<feature type="compositionally biased region" description="Basic residues" evidence="4">
    <location>
        <begin position="988"/>
        <end position="1005"/>
    </location>
</feature>
<feature type="compositionally biased region" description="Polar residues" evidence="4">
    <location>
        <begin position="1009"/>
        <end position="1019"/>
    </location>
</feature>
<feature type="compositionally biased region" description="Low complexity" evidence="4">
    <location>
        <begin position="1020"/>
        <end position="1040"/>
    </location>
</feature>
<feature type="compositionally biased region" description="Polar residues" evidence="4">
    <location>
        <begin position="1470"/>
        <end position="1487"/>
    </location>
</feature>
<feature type="modified residue" description="Phosphoserine" evidence="1">
    <location>
        <position position="284"/>
    </location>
</feature>
<organism>
    <name type="scientific">Drosophila mojavensis</name>
    <name type="common">Fruit fly</name>
    <dbReference type="NCBI Taxonomy" id="7230"/>
    <lineage>
        <taxon>Eukaryota</taxon>
        <taxon>Metazoa</taxon>
        <taxon>Ecdysozoa</taxon>
        <taxon>Arthropoda</taxon>
        <taxon>Hexapoda</taxon>
        <taxon>Insecta</taxon>
        <taxon>Pterygota</taxon>
        <taxon>Neoptera</taxon>
        <taxon>Endopterygota</taxon>
        <taxon>Diptera</taxon>
        <taxon>Brachycera</taxon>
        <taxon>Muscomorpha</taxon>
        <taxon>Ephydroidea</taxon>
        <taxon>Drosophilidae</taxon>
        <taxon>Drosophila</taxon>
    </lineage>
</organism>
<evidence type="ECO:0000250" key="1"/>
<evidence type="ECO:0000255" key="2">
    <source>
        <dbReference type="HAMAP-Rule" id="MF_03013"/>
    </source>
</evidence>
<evidence type="ECO:0000255" key="3">
    <source>
        <dbReference type="PROSITE-ProRule" id="PRU01167"/>
    </source>
</evidence>
<evidence type="ECO:0000256" key="4">
    <source>
        <dbReference type="SAM" id="MobiDB-lite"/>
    </source>
</evidence>
<gene>
    <name evidence="2" type="primary">clu</name>
    <name type="ORF">GI20574</name>
</gene>